<proteinExistence type="inferred from homology"/>
<reference key="1">
    <citation type="journal article" date="2005" name="J. Bacteriol.">
        <title>Completion of the genome sequence of Brucella abortus and comparison to the highly similar genomes of Brucella melitensis and Brucella suis.</title>
        <authorList>
            <person name="Halling S.M."/>
            <person name="Peterson-Burch B.D."/>
            <person name="Bricker B.J."/>
            <person name="Zuerner R.L."/>
            <person name="Qing Z."/>
            <person name="Li L.-L."/>
            <person name="Kapur V."/>
            <person name="Alt D.P."/>
            <person name="Olsen S.C."/>
        </authorList>
    </citation>
    <scope>NUCLEOTIDE SEQUENCE [LARGE SCALE GENOMIC DNA]</scope>
    <source>
        <strain>9-941</strain>
    </source>
</reference>
<organism>
    <name type="scientific">Brucella abortus biovar 1 (strain 9-941)</name>
    <dbReference type="NCBI Taxonomy" id="262698"/>
    <lineage>
        <taxon>Bacteria</taxon>
        <taxon>Pseudomonadati</taxon>
        <taxon>Pseudomonadota</taxon>
        <taxon>Alphaproteobacteria</taxon>
        <taxon>Hyphomicrobiales</taxon>
        <taxon>Brucellaceae</taxon>
        <taxon>Brucella/Ochrobactrum group</taxon>
        <taxon>Brucella</taxon>
    </lineage>
</organism>
<name>ADEC_BRUAB</name>
<gene>
    <name evidence="1" type="primary">ade</name>
    <name type="ordered locus">BruAb2_0573</name>
</gene>
<dbReference type="EC" id="3.5.4.2" evidence="1"/>
<dbReference type="EMBL" id="AE017224">
    <property type="protein sequence ID" value="AAX75990.1"/>
    <property type="molecule type" value="Genomic_DNA"/>
</dbReference>
<dbReference type="SMR" id="Q578E4"/>
<dbReference type="EnsemblBacteria" id="AAX75990">
    <property type="protein sequence ID" value="AAX75990"/>
    <property type="gene ID" value="BruAb2_0573"/>
</dbReference>
<dbReference type="KEGG" id="bmb:BruAb2_0573"/>
<dbReference type="HOGENOM" id="CLU_027935_0_0_5"/>
<dbReference type="Proteomes" id="UP000000540">
    <property type="component" value="Chromosome II"/>
</dbReference>
<dbReference type="GO" id="GO:0000034">
    <property type="term" value="F:adenine deaminase activity"/>
    <property type="evidence" value="ECO:0007669"/>
    <property type="project" value="UniProtKB-UniRule"/>
</dbReference>
<dbReference type="GO" id="GO:0006146">
    <property type="term" value="P:adenine catabolic process"/>
    <property type="evidence" value="ECO:0007669"/>
    <property type="project" value="InterPro"/>
</dbReference>
<dbReference type="CDD" id="cd01295">
    <property type="entry name" value="AdeC"/>
    <property type="match status" value="1"/>
</dbReference>
<dbReference type="Gene3D" id="3.20.20.140">
    <property type="entry name" value="Metal-dependent hydrolases"/>
    <property type="match status" value="1"/>
</dbReference>
<dbReference type="Gene3D" id="2.30.40.10">
    <property type="entry name" value="Urease, subunit C, domain 1"/>
    <property type="match status" value="1"/>
</dbReference>
<dbReference type="HAMAP" id="MF_01518">
    <property type="entry name" value="Adenine_deamin"/>
    <property type="match status" value="1"/>
</dbReference>
<dbReference type="InterPro" id="IPR006679">
    <property type="entry name" value="Adenine_deam"/>
</dbReference>
<dbReference type="InterPro" id="IPR026912">
    <property type="entry name" value="Adenine_deam_C"/>
</dbReference>
<dbReference type="InterPro" id="IPR006680">
    <property type="entry name" value="Amidohydro-rel"/>
</dbReference>
<dbReference type="InterPro" id="IPR011059">
    <property type="entry name" value="Metal-dep_hydrolase_composite"/>
</dbReference>
<dbReference type="InterPro" id="IPR032466">
    <property type="entry name" value="Metal_Hydrolase"/>
</dbReference>
<dbReference type="NCBIfam" id="TIGR01178">
    <property type="entry name" value="ade"/>
    <property type="match status" value="1"/>
</dbReference>
<dbReference type="PANTHER" id="PTHR11113:SF2">
    <property type="entry name" value="ADENINE DEAMINASE"/>
    <property type="match status" value="1"/>
</dbReference>
<dbReference type="PANTHER" id="PTHR11113">
    <property type="entry name" value="N-ACETYLGLUCOSAMINE-6-PHOSPHATE DEACETYLASE"/>
    <property type="match status" value="1"/>
</dbReference>
<dbReference type="Pfam" id="PF13382">
    <property type="entry name" value="Adenine_deam_C"/>
    <property type="match status" value="1"/>
</dbReference>
<dbReference type="Pfam" id="PF01979">
    <property type="entry name" value="Amidohydro_1"/>
    <property type="match status" value="1"/>
</dbReference>
<dbReference type="SUPFAM" id="SSF51338">
    <property type="entry name" value="Composite domain of metallo-dependent hydrolases"/>
    <property type="match status" value="1"/>
</dbReference>
<dbReference type="SUPFAM" id="SSF51556">
    <property type="entry name" value="Metallo-dependent hydrolases"/>
    <property type="match status" value="1"/>
</dbReference>
<sequence>MRHCDSFCELIPMKGCEAMLEWMIDQGAGREPADIVLKGGRFLDLITGELVESDIAICEDRIVGTFGTYRGKHEIDVSGRIVVPGFIDTHLHIASSQVTPHEFDRCVLPQGVTTAICDPHEIANVLGAEGIRFFLDSALETVMDIRVQLSSCVPATHMETSGAELLIDDLLPFADHPKVIGLAEFMNFPGVLAKDPECMAKLRAFQGRHIDGHAPLLRGLDLNGYIAAGIRTEHEATNAEEALEKLRKGMYVLVREGSVSKDLKALMPIITERHAQFLALCTDDRNPLDIADQGHLDYLIRTAIAGGVEPLAIYRAASVSAARVFGLFDRGLVAPGQRADLVVVDSLEGCHAEIVLSAGRVVSEALFAARKPVAEVGRNSVKAPRVTASNFRSQSNSGKTRAIGIVPGKIITQNLEFDLKVGPNGVEPDLERDVVKVAVIERHGKNGNIATGFVHGFGLKAGAIASTVSHDSHNICVVGASDEDIATAANRLGEIEGGFVVVRDGKVLAEMPLPIAGLMSTEPYETVREALRKLRHAAEDLGSVLEEPFLQLAFIALPVIPHLKITDRGLVDVDKFEFVGN</sequence>
<protein>
    <recommendedName>
        <fullName evidence="1">Adenine deaminase</fullName>
        <shortName evidence="1">Adenase</shortName>
        <shortName evidence="1">Adenine aminase</shortName>
        <ecNumber evidence="1">3.5.4.2</ecNumber>
    </recommendedName>
</protein>
<comment type="catalytic activity">
    <reaction evidence="1">
        <text>adenine + H2O + H(+) = hypoxanthine + NH4(+)</text>
        <dbReference type="Rhea" id="RHEA:23688"/>
        <dbReference type="ChEBI" id="CHEBI:15377"/>
        <dbReference type="ChEBI" id="CHEBI:15378"/>
        <dbReference type="ChEBI" id="CHEBI:16708"/>
        <dbReference type="ChEBI" id="CHEBI:17368"/>
        <dbReference type="ChEBI" id="CHEBI:28938"/>
        <dbReference type="EC" id="3.5.4.2"/>
    </reaction>
</comment>
<comment type="cofactor">
    <cofactor evidence="1">
        <name>Mn(2+)</name>
        <dbReference type="ChEBI" id="CHEBI:29035"/>
    </cofactor>
</comment>
<comment type="similarity">
    <text evidence="1">Belongs to the metallo-dependent hydrolases superfamily. Adenine deaminase family.</text>
</comment>
<feature type="chain" id="PRO_0000142409" description="Adenine deaminase">
    <location>
        <begin position="1"/>
        <end position="581"/>
    </location>
</feature>
<evidence type="ECO:0000255" key="1">
    <source>
        <dbReference type="HAMAP-Rule" id="MF_01518"/>
    </source>
</evidence>
<keyword id="KW-0378">Hydrolase</keyword>
<keyword id="KW-0464">Manganese</keyword>
<accession>Q578E4</accession>